<comment type="function">
    <text evidence="1">Insect active toxin causing rapid but reversible paralysis in crickets. No activity shown in mammals. Does not show effect on mammalian voltage-gated calcium channels (By similarity).</text>
</comment>
<comment type="subcellular location">
    <subcellularLocation>
        <location evidence="1">Secreted</location>
    </subcellularLocation>
</comment>
<comment type="tissue specificity">
    <text>Expressed by the venom gland.</text>
</comment>
<comment type="domain">
    <text evidence="1">The presence of a 'disulfide through disulfide knot' structurally defines this protein as a knottin.</text>
</comment>
<comment type="similarity">
    <text evidence="3">Belongs to the neurotoxin 01 (U2-agtx) family.</text>
</comment>
<proteinExistence type="evidence at transcript level"/>
<keyword id="KW-0027">Amidation</keyword>
<keyword id="KW-1015">Disulfide bond</keyword>
<keyword id="KW-0960">Knottin</keyword>
<keyword id="KW-0528">Neurotoxin</keyword>
<keyword id="KW-0964">Secreted</keyword>
<keyword id="KW-0732">Signal</keyword>
<keyword id="KW-0800">Toxin</keyword>
<organism>
    <name type="scientific">Agelena orientalis</name>
    <name type="common">Funnel-web spider</name>
    <dbReference type="NCBI Taxonomy" id="293813"/>
    <lineage>
        <taxon>Eukaryota</taxon>
        <taxon>Metazoa</taxon>
        <taxon>Ecdysozoa</taxon>
        <taxon>Arthropoda</taxon>
        <taxon>Chelicerata</taxon>
        <taxon>Arachnida</taxon>
        <taxon>Araneae</taxon>
        <taxon>Araneomorphae</taxon>
        <taxon>Entelegynae</taxon>
        <taxon>Agelenidae</taxon>
        <taxon>Agelena</taxon>
    </lineage>
</organism>
<name>TAG2B_AGEOR</name>
<reference key="1">
    <citation type="journal article" date="2005" name="Proteins">
        <title>A novel strategy for the identification of toxinlike structures in spider venom.</title>
        <authorList>
            <person name="Kozlov S.A."/>
            <person name="Malyavka A."/>
            <person name="McCutchen B."/>
            <person name="Lu A."/>
            <person name="Schepers E."/>
            <person name="Herrmann R."/>
            <person name="Grishin E.V."/>
        </authorList>
    </citation>
    <scope>NUCLEOTIDE SEQUENCE [MRNA]</scope>
    <source>
        <tissue>Venom gland</tissue>
    </source>
</reference>
<dbReference type="EMBL" id="AY681298">
    <property type="protein sequence ID" value="AAU93656.1"/>
    <property type="molecule type" value="mRNA"/>
</dbReference>
<dbReference type="SMR" id="Q5Y4Y4"/>
<dbReference type="ArachnoServer" id="AS000112">
    <property type="toxin name" value="U2-agatoxin-Ao1b"/>
</dbReference>
<dbReference type="GO" id="GO:0005576">
    <property type="term" value="C:extracellular region"/>
    <property type="evidence" value="ECO:0007669"/>
    <property type="project" value="UniProtKB-SubCell"/>
</dbReference>
<dbReference type="GO" id="GO:0090729">
    <property type="term" value="F:toxin activity"/>
    <property type="evidence" value="ECO:0007669"/>
    <property type="project" value="UniProtKB-KW"/>
</dbReference>
<dbReference type="Pfam" id="PF05980">
    <property type="entry name" value="Toxin_7"/>
    <property type="match status" value="1"/>
</dbReference>
<dbReference type="SUPFAM" id="SSF57059">
    <property type="entry name" value="omega toxin-like"/>
    <property type="match status" value="1"/>
</dbReference>
<feature type="signal peptide" evidence="2">
    <location>
        <begin position="1"/>
        <end position="20"/>
    </location>
</feature>
<feature type="propeptide" id="PRO_5000093605" evidence="2">
    <location>
        <begin position="21"/>
        <end position="34"/>
    </location>
</feature>
<feature type="chain" id="PRO_5000093606" description="U2-agatoxin-Ao1b">
    <location>
        <begin position="35"/>
        <end position="69"/>
    </location>
</feature>
<feature type="modified residue" description="Leucine amide" evidence="1">
    <location>
        <position position="69"/>
    </location>
</feature>
<feature type="disulfide bond" evidence="1">
    <location>
        <begin position="37"/>
        <end position="53"/>
    </location>
</feature>
<feature type="disulfide bond" evidence="1">
    <location>
        <begin position="44"/>
        <end position="58"/>
    </location>
</feature>
<feature type="disulfide bond" evidence="1">
    <location>
        <begin position="52"/>
        <end position="68"/>
    </location>
</feature>
<evidence type="ECO:0000250" key="1"/>
<evidence type="ECO:0000255" key="2"/>
<evidence type="ECO:0000305" key="3"/>
<protein>
    <recommendedName>
        <fullName>U2-agatoxin-Ao1b</fullName>
        <shortName>U2-AGTX-Ao1b</shortName>
    </recommendedName>
    <alternativeName>
        <fullName>Agel_01</fullName>
    </alternativeName>
</protein>
<accession>Q5Y4Y4</accession>
<sequence>MRAIISLILISAMVFSMIAAVPEEEGLQLSEDERGGCLPHNRFCNALSGPRCCSGLRCKELSIWDSRCLG</sequence>